<gene>
    <name evidence="1" type="primary">ruvA</name>
    <name type="ordered locus">SAV1642</name>
</gene>
<dbReference type="EMBL" id="BA000017">
    <property type="protein sequence ID" value="BAB57804.1"/>
    <property type="molecule type" value="Genomic_DNA"/>
</dbReference>
<dbReference type="RefSeq" id="WP_000271550.1">
    <property type="nucleotide sequence ID" value="NC_002758.2"/>
</dbReference>
<dbReference type="SMR" id="P66748"/>
<dbReference type="KEGG" id="sav:SAV1642"/>
<dbReference type="HOGENOM" id="CLU_087936_1_0_9"/>
<dbReference type="PhylomeDB" id="P66748"/>
<dbReference type="Proteomes" id="UP000002481">
    <property type="component" value="Chromosome"/>
</dbReference>
<dbReference type="GO" id="GO:0005737">
    <property type="term" value="C:cytoplasm"/>
    <property type="evidence" value="ECO:0007669"/>
    <property type="project" value="UniProtKB-SubCell"/>
</dbReference>
<dbReference type="GO" id="GO:0009379">
    <property type="term" value="C:Holliday junction helicase complex"/>
    <property type="evidence" value="ECO:0007669"/>
    <property type="project" value="InterPro"/>
</dbReference>
<dbReference type="GO" id="GO:0048476">
    <property type="term" value="C:Holliday junction resolvase complex"/>
    <property type="evidence" value="ECO:0007669"/>
    <property type="project" value="UniProtKB-UniRule"/>
</dbReference>
<dbReference type="GO" id="GO:0005524">
    <property type="term" value="F:ATP binding"/>
    <property type="evidence" value="ECO:0007669"/>
    <property type="project" value="InterPro"/>
</dbReference>
<dbReference type="GO" id="GO:0000400">
    <property type="term" value="F:four-way junction DNA binding"/>
    <property type="evidence" value="ECO:0007669"/>
    <property type="project" value="UniProtKB-UniRule"/>
</dbReference>
<dbReference type="GO" id="GO:0009378">
    <property type="term" value="F:four-way junction helicase activity"/>
    <property type="evidence" value="ECO:0007669"/>
    <property type="project" value="InterPro"/>
</dbReference>
<dbReference type="GO" id="GO:0006310">
    <property type="term" value="P:DNA recombination"/>
    <property type="evidence" value="ECO:0007669"/>
    <property type="project" value="UniProtKB-UniRule"/>
</dbReference>
<dbReference type="GO" id="GO:0006281">
    <property type="term" value="P:DNA repair"/>
    <property type="evidence" value="ECO:0007669"/>
    <property type="project" value="UniProtKB-UniRule"/>
</dbReference>
<dbReference type="CDD" id="cd14332">
    <property type="entry name" value="UBA_RuvA_C"/>
    <property type="match status" value="1"/>
</dbReference>
<dbReference type="Gene3D" id="1.10.150.20">
    <property type="entry name" value="5' to 3' exonuclease, C-terminal subdomain"/>
    <property type="match status" value="1"/>
</dbReference>
<dbReference type="Gene3D" id="1.10.8.10">
    <property type="entry name" value="DNA helicase RuvA subunit, C-terminal domain"/>
    <property type="match status" value="1"/>
</dbReference>
<dbReference type="Gene3D" id="2.40.50.140">
    <property type="entry name" value="Nucleic acid-binding proteins"/>
    <property type="match status" value="1"/>
</dbReference>
<dbReference type="HAMAP" id="MF_00031">
    <property type="entry name" value="DNA_HJ_migration_RuvA"/>
    <property type="match status" value="1"/>
</dbReference>
<dbReference type="InterPro" id="IPR013849">
    <property type="entry name" value="DNA_helicase_Holl-junc_RuvA_I"/>
</dbReference>
<dbReference type="InterPro" id="IPR003583">
    <property type="entry name" value="Hlx-hairpin-Hlx_DNA-bd_motif"/>
</dbReference>
<dbReference type="InterPro" id="IPR012340">
    <property type="entry name" value="NA-bd_OB-fold"/>
</dbReference>
<dbReference type="InterPro" id="IPR000085">
    <property type="entry name" value="RuvA"/>
</dbReference>
<dbReference type="InterPro" id="IPR010994">
    <property type="entry name" value="RuvA_2-like"/>
</dbReference>
<dbReference type="InterPro" id="IPR011114">
    <property type="entry name" value="RuvA_C"/>
</dbReference>
<dbReference type="InterPro" id="IPR036267">
    <property type="entry name" value="RuvA_C_sf"/>
</dbReference>
<dbReference type="NCBIfam" id="TIGR00084">
    <property type="entry name" value="ruvA"/>
    <property type="match status" value="1"/>
</dbReference>
<dbReference type="Pfam" id="PF14520">
    <property type="entry name" value="HHH_5"/>
    <property type="match status" value="1"/>
</dbReference>
<dbReference type="Pfam" id="PF07499">
    <property type="entry name" value="RuvA_C"/>
    <property type="match status" value="1"/>
</dbReference>
<dbReference type="Pfam" id="PF01330">
    <property type="entry name" value="RuvA_N"/>
    <property type="match status" value="1"/>
</dbReference>
<dbReference type="SMART" id="SM00278">
    <property type="entry name" value="HhH1"/>
    <property type="match status" value="2"/>
</dbReference>
<dbReference type="SUPFAM" id="SSF46929">
    <property type="entry name" value="DNA helicase RuvA subunit, C-terminal domain"/>
    <property type="match status" value="1"/>
</dbReference>
<dbReference type="SUPFAM" id="SSF50249">
    <property type="entry name" value="Nucleic acid-binding proteins"/>
    <property type="match status" value="1"/>
</dbReference>
<dbReference type="SUPFAM" id="SSF47781">
    <property type="entry name" value="RuvA domain 2-like"/>
    <property type="match status" value="1"/>
</dbReference>
<sequence>MYAYVKGKLTHLYPTHVVVETAGVGYEIQTPNSYRFQKHLDHEVLIRTSLIVREDAQLLYGFSSEEEKDMFLSLIKVTGIGPKSALAILATSTPNEVKRAIENENDTYLTKFPGIGKKTARQIVLDLKGKVKITEEDSDSLLQVDATSTVQDQFVQEAMLALEALGYSKRELAKVEKTLNKNKYDSVDEAVKAGLQLVVS</sequence>
<keyword id="KW-0963">Cytoplasm</keyword>
<keyword id="KW-0227">DNA damage</keyword>
<keyword id="KW-0233">DNA recombination</keyword>
<keyword id="KW-0234">DNA repair</keyword>
<keyword id="KW-0238">DNA-binding</keyword>
<reference key="1">
    <citation type="journal article" date="2001" name="Lancet">
        <title>Whole genome sequencing of meticillin-resistant Staphylococcus aureus.</title>
        <authorList>
            <person name="Kuroda M."/>
            <person name="Ohta T."/>
            <person name="Uchiyama I."/>
            <person name="Baba T."/>
            <person name="Yuzawa H."/>
            <person name="Kobayashi I."/>
            <person name="Cui L."/>
            <person name="Oguchi A."/>
            <person name="Aoki K."/>
            <person name="Nagai Y."/>
            <person name="Lian J.-Q."/>
            <person name="Ito T."/>
            <person name="Kanamori M."/>
            <person name="Matsumaru H."/>
            <person name="Maruyama A."/>
            <person name="Murakami H."/>
            <person name="Hosoyama A."/>
            <person name="Mizutani-Ui Y."/>
            <person name="Takahashi N.K."/>
            <person name="Sawano T."/>
            <person name="Inoue R."/>
            <person name="Kaito C."/>
            <person name="Sekimizu K."/>
            <person name="Hirakawa H."/>
            <person name="Kuhara S."/>
            <person name="Goto S."/>
            <person name="Yabuzaki J."/>
            <person name="Kanehisa M."/>
            <person name="Yamashita A."/>
            <person name="Oshima K."/>
            <person name="Furuya K."/>
            <person name="Yoshino C."/>
            <person name="Shiba T."/>
            <person name="Hattori M."/>
            <person name="Ogasawara N."/>
            <person name="Hayashi H."/>
            <person name="Hiramatsu K."/>
        </authorList>
    </citation>
    <scope>NUCLEOTIDE SEQUENCE [LARGE SCALE GENOMIC DNA]</scope>
    <source>
        <strain>Mu50 / ATCC 700699</strain>
    </source>
</reference>
<comment type="function">
    <text evidence="1">The RuvA-RuvB-RuvC complex processes Holliday junction (HJ) DNA during genetic recombination and DNA repair, while the RuvA-RuvB complex plays an important role in the rescue of blocked DNA replication forks via replication fork reversal (RFR). RuvA specifically binds to HJ cruciform DNA, conferring on it an open structure. The RuvB hexamer acts as an ATP-dependent pump, pulling dsDNA into and through the RuvAB complex. HJ branch migration allows RuvC to scan DNA until it finds its consensus sequence, where it cleaves and resolves the cruciform DNA.</text>
</comment>
<comment type="subunit">
    <text evidence="1">Homotetramer. Forms an RuvA(8)-RuvB(12)-Holliday junction (HJ) complex. HJ DNA is sandwiched between 2 RuvA tetramers; dsDNA enters through RuvA and exits via RuvB. An RuvB hexamer assembles on each DNA strand where it exits the tetramer. Each RuvB hexamer is contacted by two RuvA subunits (via domain III) on 2 adjacent RuvB subunits; this complex drives branch migration. In the full resolvosome a probable DNA-RuvA(4)-RuvB(12)-RuvC(2) complex forms which resolves the HJ.</text>
</comment>
<comment type="subcellular location">
    <subcellularLocation>
        <location evidence="1">Cytoplasm</location>
    </subcellularLocation>
</comment>
<comment type="domain">
    <text evidence="1">Has three domains with a flexible linker between the domains II and III and assumes an 'L' shape. Domain III is highly mobile and contacts RuvB.</text>
</comment>
<comment type="similarity">
    <text evidence="1">Belongs to the RuvA family.</text>
</comment>
<feature type="chain" id="PRO_0000094679" description="Holliday junction branch migration complex subunit RuvA">
    <location>
        <begin position="1"/>
        <end position="200"/>
    </location>
</feature>
<feature type="region of interest" description="Domain I" evidence="1">
    <location>
        <begin position="1"/>
        <end position="63"/>
    </location>
</feature>
<feature type="region of interest" description="Domain II" evidence="1">
    <location>
        <begin position="64"/>
        <end position="142"/>
    </location>
</feature>
<feature type="region of interest" description="Flexible linker" evidence="1">
    <location>
        <begin position="143"/>
        <end position="149"/>
    </location>
</feature>
<feature type="region of interest" description="Domain III" evidence="1">
    <location>
        <begin position="150"/>
        <end position="200"/>
    </location>
</feature>
<organism>
    <name type="scientific">Staphylococcus aureus (strain Mu50 / ATCC 700699)</name>
    <dbReference type="NCBI Taxonomy" id="158878"/>
    <lineage>
        <taxon>Bacteria</taxon>
        <taxon>Bacillati</taxon>
        <taxon>Bacillota</taxon>
        <taxon>Bacilli</taxon>
        <taxon>Bacillales</taxon>
        <taxon>Staphylococcaceae</taxon>
        <taxon>Staphylococcus</taxon>
    </lineage>
</organism>
<proteinExistence type="inferred from homology"/>
<evidence type="ECO:0000255" key="1">
    <source>
        <dbReference type="HAMAP-Rule" id="MF_00031"/>
    </source>
</evidence>
<name>RUVA_STAAM</name>
<protein>
    <recommendedName>
        <fullName evidence="1">Holliday junction branch migration complex subunit RuvA</fullName>
    </recommendedName>
</protein>
<accession>P66748</accession>
<accession>Q99TL1</accession>